<protein>
    <recommendedName>
        <fullName evidence="1">dITP/XTP pyrophosphatase</fullName>
        <ecNumber evidence="1">3.6.1.66</ecNumber>
    </recommendedName>
    <alternativeName>
        <fullName evidence="1">Non-canonical purine NTP pyrophosphatase</fullName>
    </alternativeName>
    <alternativeName>
        <fullName evidence="1">Non-standard purine NTP pyrophosphatase</fullName>
    </alternativeName>
    <alternativeName>
        <fullName evidence="1">Nucleoside-triphosphate diphosphatase</fullName>
    </alternativeName>
    <alternativeName>
        <fullName evidence="1">Nucleoside-triphosphate pyrophosphatase</fullName>
        <shortName evidence="1">NTPase</shortName>
    </alternativeName>
</protein>
<reference key="1">
    <citation type="journal article" date="2003" name="Proc. Natl. Acad. Sci. U.S.A.">
        <title>Genome sequence of the cyanobacterium Prochlorococcus marinus SS120, a nearly minimal oxyphototrophic genome.</title>
        <authorList>
            <person name="Dufresne A."/>
            <person name="Salanoubat M."/>
            <person name="Partensky F."/>
            <person name="Artiguenave F."/>
            <person name="Axmann I.M."/>
            <person name="Barbe V."/>
            <person name="Duprat S."/>
            <person name="Galperin M.Y."/>
            <person name="Koonin E.V."/>
            <person name="Le Gall F."/>
            <person name="Makarova K.S."/>
            <person name="Ostrowski M."/>
            <person name="Oztas S."/>
            <person name="Robert C."/>
            <person name="Rogozin I.B."/>
            <person name="Scanlan D.J."/>
            <person name="Tandeau de Marsac N."/>
            <person name="Weissenbach J."/>
            <person name="Wincker P."/>
            <person name="Wolf Y.I."/>
            <person name="Hess W.R."/>
        </authorList>
    </citation>
    <scope>NUCLEOTIDE SEQUENCE [LARGE SCALE GENOMIC DNA]</scope>
    <source>
        <strain>SARG / CCMP1375 / SS120</strain>
    </source>
</reference>
<keyword id="KW-0378">Hydrolase</keyword>
<keyword id="KW-0460">Magnesium</keyword>
<keyword id="KW-0479">Metal-binding</keyword>
<keyword id="KW-0546">Nucleotide metabolism</keyword>
<keyword id="KW-0547">Nucleotide-binding</keyword>
<keyword id="KW-1185">Reference proteome</keyword>
<proteinExistence type="inferred from homology"/>
<accession>Q7VDQ7</accession>
<organism>
    <name type="scientific">Prochlorococcus marinus (strain SARG / CCMP1375 / SS120)</name>
    <dbReference type="NCBI Taxonomy" id="167539"/>
    <lineage>
        <taxon>Bacteria</taxon>
        <taxon>Bacillati</taxon>
        <taxon>Cyanobacteriota</taxon>
        <taxon>Cyanophyceae</taxon>
        <taxon>Synechococcales</taxon>
        <taxon>Prochlorococcaceae</taxon>
        <taxon>Prochlorococcus</taxon>
    </lineage>
</organism>
<evidence type="ECO:0000255" key="1">
    <source>
        <dbReference type="HAMAP-Rule" id="MF_01405"/>
    </source>
</evidence>
<name>IXTPA_PROMA</name>
<sequence>MSFNLGKSLTKLIIASNNDGKIEEFIQLLSGIPLVVMGQPKHLEVEETGVSFAENARIKAIAVAKATGEMALADDSGLSVGSLGGAPGVFSARYANTDLERVSRLLKELEMVDDRSAFFSAALCLASSKGEVLLELDGRCDGIITTTPRGKFGFGYDPIFEVKGTGLTFSEMDSKQKRELSHRGLAVKKLIPSLKKILDS</sequence>
<gene>
    <name type="ordered locus">Pro_0311</name>
</gene>
<comment type="function">
    <text evidence="1">Pyrophosphatase that catalyzes the hydrolysis of nucleoside triphosphates to their monophosphate derivatives, with a high preference for the non-canonical purine nucleotides XTP (xanthosine triphosphate), dITP (deoxyinosine triphosphate) and ITP. Seems to function as a house-cleaning enzyme that removes non-canonical purine nucleotides from the nucleotide pool, thus preventing their incorporation into DNA/RNA and avoiding chromosomal lesions.</text>
</comment>
<comment type="catalytic activity">
    <reaction evidence="1">
        <text>XTP + H2O = XMP + diphosphate + H(+)</text>
        <dbReference type="Rhea" id="RHEA:28610"/>
        <dbReference type="ChEBI" id="CHEBI:15377"/>
        <dbReference type="ChEBI" id="CHEBI:15378"/>
        <dbReference type="ChEBI" id="CHEBI:33019"/>
        <dbReference type="ChEBI" id="CHEBI:57464"/>
        <dbReference type="ChEBI" id="CHEBI:61314"/>
        <dbReference type="EC" id="3.6.1.66"/>
    </reaction>
</comment>
<comment type="catalytic activity">
    <reaction evidence="1">
        <text>dITP + H2O = dIMP + diphosphate + H(+)</text>
        <dbReference type="Rhea" id="RHEA:28342"/>
        <dbReference type="ChEBI" id="CHEBI:15377"/>
        <dbReference type="ChEBI" id="CHEBI:15378"/>
        <dbReference type="ChEBI" id="CHEBI:33019"/>
        <dbReference type="ChEBI" id="CHEBI:61194"/>
        <dbReference type="ChEBI" id="CHEBI:61382"/>
        <dbReference type="EC" id="3.6.1.66"/>
    </reaction>
</comment>
<comment type="catalytic activity">
    <reaction evidence="1">
        <text>ITP + H2O = IMP + diphosphate + H(+)</text>
        <dbReference type="Rhea" id="RHEA:29399"/>
        <dbReference type="ChEBI" id="CHEBI:15377"/>
        <dbReference type="ChEBI" id="CHEBI:15378"/>
        <dbReference type="ChEBI" id="CHEBI:33019"/>
        <dbReference type="ChEBI" id="CHEBI:58053"/>
        <dbReference type="ChEBI" id="CHEBI:61402"/>
        <dbReference type="EC" id="3.6.1.66"/>
    </reaction>
</comment>
<comment type="cofactor">
    <cofactor evidence="1">
        <name>Mg(2+)</name>
        <dbReference type="ChEBI" id="CHEBI:18420"/>
    </cofactor>
    <text evidence="1">Binds 1 Mg(2+) ion per subunit.</text>
</comment>
<comment type="subunit">
    <text evidence="1">Homodimer.</text>
</comment>
<comment type="similarity">
    <text evidence="1">Belongs to the HAM1 NTPase family.</text>
</comment>
<dbReference type="EC" id="3.6.1.66" evidence="1"/>
<dbReference type="EMBL" id="AE017126">
    <property type="protein sequence ID" value="AAP99357.1"/>
    <property type="molecule type" value="Genomic_DNA"/>
</dbReference>
<dbReference type="RefSeq" id="NP_874705.1">
    <property type="nucleotide sequence ID" value="NC_005042.1"/>
</dbReference>
<dbReference type="SMR" id="Q7VDQ7"/>
<dbReference type="STRING" id="167539.Pro_0311"/>
<dbReference type="EnsemblBacteria" id="AAP99357">
    <property type="protein sequence ID" value="AAP99357"/>
    <property type="gene ID" value="Pro_0311"/>
</dbReference>
<dbReference type="KEGG" id="pma:Pro_0311"/>
<dbReference type="PATRIC" id="fig|167539.5.peg.320"/>
<dbReference type="eggNOG" id="COG0127">
    <property type="taxonomic scope" value="Bacteria"/>
</dbReference>
<dbReference type="HOGENOM" id="CLU_082080_0_2_3"/>
<dbReference type="OrthoDB" id="9807456at2"/>
<dbReference type="Proteomes" id="UP000001420">
    <property type="component" value="Chromosome"/>
</dbReference>
<dbReference type="GO" id="GO:0005829">
    <property type="term" value="C:cytosol"/>
    <property type="evidence" value="ECO:0007669"/>
    <property type="project" value="TreeGrafter"/>
</dbReference>
<dbReference type="GO" id="GO:0035870">
    <property type="term" value="F:dITP diphosphatase activity"/>
    <property type="evidence" value="ECO:0007669"/>
    <property type="project" value="RHEA"/>
</dbReference>
<dbReference type="GO" id="GO:0036220">
    <property type="term" value="F:ITP diphosphatase activity"/>
    <property type="evidence" value="ECO:0007669"/>
    <property type="project" value="UniProtKB-EC"/>
</dbReference>
<dbReference type="GO" id="GO:0046872">
    <property type="term" value="F:metal ion binding"/>
    <property type="evidence" value="ECO:0007669"/>
    <property type="project" value="UniProtKB-KW"/>
</dbReference>
<dbReference type="GO" id="GO:0000166">
    <property type="term" value="F:nucleotide binding"/>
    <property type="evidence" value="ECO:0007669"/>
    <property type="project" value="UniProtKB-KW"/>
</dbReference>
<dbReference type="GO" id="GO:0017111">
    <property type="term" value="F:ribonucleoside triphosphate phosphatase activity"/>
    <property type="evidence" value="ECO:0007669"/>
    <property type="project" value="InterPro"/>
</dbReference>
<dbReference type="GO" id="GO:0036222">
    <property type="term" value="F:XTP diphosphatase activity"/>
    <property type="evidence" value="ECO:0007669"/>
    <property type="project" value="RHEA"/>
</dbReference>
<dbReference type="GO" id="GO:0009117">
    <property type="term" value="P:nucleotide metabolic process"/>
    <property type="evidence" value="ECO:0007669"/>
    <property type="project" value="UniProtKB-KW"/>
</dbReference>
<dbReference type="GO" id="GO:0009146">
    <property type="term" value="P:purine nucleoside triphosphate catabolic process"/>
    <property type="evidence" value="ECO:0007669"/>
    <property type="project" value="UniProtKB-UniRule"/>
</dbReference>
<dbReference type="CDD" id="cd00515">
    <property type="entry name" value="HAM1"/>
    <property type="match status" value="1"/>
</dbReference>
<dbReference type="FunFam" id="3.90.950.10:FF:000001">
    <property type="entry name" value="dITP/XTP pyrophosphatase"/>
    <property type="match status" value="1"/>
</dbReference>
<dbReference type="Gene3D" id="3.90.950.10">
    <property type="match status" value="1"/>
</dbReference>
<dbReference type="HAMAP" id="MF_01405">
    <property type="entry name" value="Non_canon_purine_NTPase"/>
    <property type="match status" value="1"/>
</dbReference>
<dbReference type="InterPro" id="IPR020922">
    <property type="entry name" value="dITP/XTP_pyrophosphatase"/>
</dbReference>
<dbReference type="InterPro" id="IPR029001">
    <property type="entry name" value="ITPase-like_fam"/>
</dbReference>
<dbReference type="InterPro" id="IPR002637">
    <property type="entry name" value="RdgB/HAM1"/>
</dbReference>
<dbReference type="NCBIfam" id="TIGR00042">
    <property type="entry name" value="RdgB/HAM1 family non-canonical purine NTP pyrophosphatase"/>
    <property type="match status" value="1"/>
</dbReference>
<dbReference type="PANTHER" id="PTHR11067:SF9">
    <property type="entry name" value="INOSINE TRIPHOSPHATE PYROPHOSPHATASE"/>
    <property type="match status" value="1"/>
</dbReference>
<dbReference type="PANTHER" id="PTHR11067">
    <property type="entry name" value="INOSINE TRIPHOSPHATE PYROPHOSPHATASE/HAM1 PROTEIN"/>
    <property type="match status" value="1"/>
</dbReference>
<dbReference type="Pfam" id="PF01725">
    <property type="entry name" value="Ham1p_like"/>
    <property type="match status" value="1"/>
</dbReference>
<dbReference type="SUPFAM" id="SSF52972">
    <property type="entry name" value="ITPase-like"/>
    <property type="match status" value="1"/>
</dbReference>
<feature type="chain" id="PRO_0000178210" description="dITP/XTP pyrophosphatase">
    <location>
        <begin position="1"/>
        <end position="200"/>
    </location>
</feature>
<feature type="active site" description="Proton acceptor" evidence="1">
    <location>
        <position position="75"/>
    </location>
</feature>
<feature type="binding site" evidence="1">
    <location>
        <begin position="16"/>
        <end position="21"/>
    </location>
    <ligand>
        <name>substrate</name>
    </ligand>
</feature>
<feature type="binding site" evidence="1">
    <location>
        <position position="46"/>
    </location>
    <ligand>
        <name>Mg(2+)</name>
        <dbReference type="ChEBI" id="CHEBI:18420"/>
    </ligand>
</feature>
<feature type="binding site" evidence="1">
    <location>
        <position position="75"/>
    </location>
    <ligand>
        <name>Mg(2+)</name>
        <dbReference type="ChEBI" id="CHEBI:18420"/>
    </ligand>
</feature>
<feature type="binding site" evidence="1">
    <location>
        <position position="76"/>
    </location>
    <ligand>
        <name>substrate</name>
    </ligand>
</feature>
<feature type="binding site" evidence="1">
    <location>
        <begin position="154"/>
        <end position="157"/>
    </location>
    <ligand>
        <name>substrate</name>
    </ligand>
</feature>
<feature type="binding site" evidence="1">
    <location>
        <position position="177"/>
    </location>
    <ligand>
        <name>substrate</name>
    </ligand>
</feature>
<feature type="binding site" evidence="1">
    <location>
        <begin position="182"/>
        <end position="183"/>
    </location>
    <ligand>
        <name>substrate</name>
    </ligand>
</feature>